<organism>
    <name type="scientific">Rhodopseudomonas palustris (strain ATCC BAA-98 / CGA009)</name>
    <dbReference type="NCBI Taxonomy" id="258594"/>
    <lineage>
        <taxon>Bacteria</taxon>
        <taxon>Pseudomonadati</taxon>
        <taxon>Pseudomonadota</taxon>
        <taxon>Alphaproteobacteria</taxon>
        <taxon>Hyphomicrobiales</taxon>
        <taxon>Nitrobacteraceae</taxon>
        <taxon>Rhodopseudomonas</taxon>
    </lineage>
</organism>
<name>GLMM_RHOPA</name>
<protein>
    <recommendedName>
        <fullName evidence="1">Phosphoglucosamine mutase</fullName>
        <ecNumber evidence="1">5.4.2.10</ecNumber>
    </recommendedName>
</protein>
<reference key="1">
    <citation type="journal article" date="2004" name="Nat. Biotechnol.">
        <title>Complete genome sequence of the metabolically versatile photosynthetic bacterium Rhodopseudomonas palustris.</title>
        <authorList>
            <person name="Larimer F.W."/>
            <person name="Chain P."/>
            <person name="Hauser L."/>
            <person name="Lamerdin J.E."/>
            <person name="Malfatti S."/>
            <person name="Do L."/>
            <person name="Land M.L."/>
            <person name="Pelletier D.A."/>
            <person name="Beatty J.T."/>
            <person name="Lang A.S."/>
            <person name="Tabita F.R."/>
            <person name="Gibson J.L."/>
            <person name="Hanson T.E."/>
            <person name="Bobst C."/>
            <person name="Torres y Torres J.L."/>
            <person name="Peres C."/>
            <person name="Harrison F.H."/>
            <person name="Gibson J."/>
            <person name="Harwood C.S."/>
        </authorList>
    </citation>
    <scope>NUCLEOTIDE SEQUENCE [LARGE SCALE GENOMIC DNA]</scope>
    <source>
        <strain>ATCC BAA-98 / CGA009</strain>
    </source>
</reference>
<comment type="function">
    <text evidence="1">Catalyzes the conversion of glucosamine-6-phosphate to glucosamine-1-phosphate.</text>
</comment>
<comment type="catalytic activity">
    <reaction evidence="1">
        <text>alpha-D-glucosamine 1-phosphate = D-glucosamine 6-phosphate</text>
        <dbReference type="Rhea" id="RHEA:23424"/>
        <dbReference type="ChEBI" id="CHEBI:58516"/>
        <dbReference type="ChEBI" id="CHEBI:58725"/>
        <dbReference type="EC" id="5.4.2.10"/>
    </reaction>
</comment>
<comment type="cofactor">
    <cofactor evidence="1">
        <name>Mg(2+)</name>
        <dbReference type="ChEBI" id="CHEBI:18420"/>
    </cofactor>
    <text evidence="1">Binds 1 Mg(2+) ion per subunit.</text>
</comment>
<comment type="PTM">
    <text evidence="1">Activated by phosphorylation.</text>
</comment>
<comment type="similarity">
    <text evidence="1">Belongs to the phosphohexose mutase family.</text>
</comment>
<sequence>MSRRYFGTDGIRGRANGLITPELALKVGQAAGLAFQRGEHRHRVVIGKDTRLSGYMIENALVAGFTSVGMDVLLVGPMPTPAVAMLTKSMRADLGVMISASHNLFEDNGIKLFGPLGYKLSDDVEKQIELMLDESLDKKLAQSASLGRARRIDGVHDRYIEFAKRTLPRELSLEGLRVVIDCANGAAYKVVPEALWELGADVISIGVEPDGFNINKECGSTAPQALCAKVREMRADIGIALDGDADRVILVDERGHVVDGDQLLAVIGQSWKEDGRLAKPGVVATVMSNLGLERFLAGEGIALLRTPVGDRYVLEQMLKDGYNVGGESSGHIILSDFNTTGDGFVAALQVLAMVQKLGRPVSEVCHRFDPLPQILKNVRYRSGRPLDDSGVISAIQDGEKRLNGHGRLLIRPSGTEPVIRVMGEGDDHDVVEEVVDSIVDALGNAAAAAA</sequence>
<keyword id="KW-0413">Isomerase</keyword>
<keyword id="KW-0460">Magnesium</keyword>
<keyword id="KW-0479">Metal-binding</keyword>
<keyword id="KW-0597">Phosphoprotein</keyword>
<gene>
    <name evidence="1" type="primary">glmM</name>
    <name type="ordered locus">RPA4318</name>
</gene>
<accession>Q6N1T6</accession>
<feature type="chain" id="PRO_0000147949" description="Phosphoglucosamine mutase">
    <location>
        <begin position="1"/>
        <end position="450"/>
    </location>
</feature>
<feature type="active site" description="Phosphoserine intermediate" evidence="1">
    <location>
        <position position="101"/>
    </location>
</feature>
<feature type="binding site" description="via phosphate group" evidence="1">
    <location>
        <position position="101"/>
    </location>
    <ligand>
        <name>Mg(2+)</name>
        <dbReference type="ChEBI" id="CHEBI:18420"/>
    </ligand>
</feature>
<feature type="binding site" evidence="1">
    <location>
        <position position="242"/>
    </location>
    <ligand>
        <name>Mg(2+)</name>
        <dbReference type="ChEBI" id="CHEBI:18420"/>
    </ligand>
</feature>
<feature type="binding site" evidence="1">
    <location>
        <position position="244"/>
    </location>
    <ligand>
        <name>Mg(2+)</name>
        <dbReference type="ChEBI" id="CHEBI:18420"/>
    </ligand>
</feature>
<feature type="binding site" evidence="1">
    <location>
        <position position="246"/>
    </location>
    <ligand>
        <name>Mg(2+)</name>
        <dbReference type="ChEBI" id="CHEBI:18420"/>
    </ligand>
</feature>
<feature type="modified residue" description="Phosphoserine" evidence="1">
    <location>
        <position position="101"/>
    </location>
</feature>
<evidence type="ECO:0000255" key="1">
    <source>
        <dbReference type="HAMAP-Rule" id="MF_01554"/>
    </source>
</evidence>
<dbReference type="EC" id="5.4.2.10" evidence="1"/>
<dbReference type="EMBL" id="BX572606">
    <property type="protein sequence ID" value="CAE29759.1"/>
    <property type="molecule type" value="Genomic_DNA"/>
</dbReference>
<dbReference type="RefSeq" id="WP_011159852.1">
    <property type="nucleotide sequence ID" value="NZ_CP116810.1"/>
</dbReference>
<dbReference type="SMR" id="Q6N1T6"/>
<dbReference type="STRING" id="258594.RPA4318"/>
<dbReference type="GeneID" id="66895448"/>
<dbReference type="eggNOG" id="COG1109">
    <property type="taxonomic scope" value="Bacteria"/>
</dbReference>
<dbReference type="HOGENOM" id="CLU_016950_7_0_5"/>
<dbReference type="PhylomeDB" id="Q6N1T6"/>
<dbReference type="GO" id="GO:0005829">
    <property type="term" value="C:cytosol"/>
    <property type="evidence" value="ECO:0007669"/>
    <property type="project" value="TreeGrafter"/>
</dbReference>
<dbReference type="GO" id="GO:0000287">
    <property type="term" value="F:magnesium ion binding"/>
    <property type="evidence" value="ECO:0007669"/>
    <property type="project" value="UniProtKB-UniRule"/>
</dbReference>
<dbReference type="GO" id="GO:0008966">
    <property type="term" value="F:phosphoglucosamine mutase activity"/>
    <property type="evidence" value="ECO:0007669"/>
    <property type="project" value="UniProtKB-UniRule"/>
</dbReference>
<dbReference type="GO" id="GO:0004615">
    <property type="term" value="F:phosphomannomutase activity"/>
    <property type="evidence" value="ECO:0007669"/>
    <property type="project" value="TreeGrafter"/>
</dbReference>
<dbReference type="GO" id="GO:0005975">
    <property type="term" value="P:carbohydrate metabolic process"/>
    <property type="evidence" value="ECO:0007669"/>
    <property type="project" value="InterPro"/>
</dbReference>
<dbReference type="GO" id="GO:0009252">
    <property type="term" value="P:peptidoglycan biosynthetic process"/>
    <property type="evidence" value="ECO:0007669"/>
    <property type="project" value="TreeGrafter"/>
</dbReference>
<dbReference type="GO" id="GO:0006048">
    <property type="term" value="P:UDP-N-acetylglucosamine biosynthetic process"/>
    <property type="evidence" value="ECO:0007669"/>
    <property type="project" value="TreeGrafter"/>
</dbReference>
<dbReference type="CDD" id="cd05802">
    <property type="entry name" value="GlmM"/>
    <property type="match status" value="1"/>
</dbReference>
<dbReference type="FunFam" id="3.30.310.50:FF:000001">
    <property type="entry name" value="Phosphoglucosamine mutase"/>
    <property type="match status" value="1"/>
</dbReference>
<dbReference type="FunFam" id="3.40.120.10:FF:000001">
    <property type="entry name" value="Phosphoglucosamine mutase"/>
    <property type="match status" value="1"/>
</dbReference>
<dbReference type="FunFam" id="3.40.120.10:FF:000003">
    <property type="entry name" value="Phosphoglucosamine mutase"/>
    <property type="match status" value="1"/>
</dbReference>
<dbReference type="Gene3D" id="3.40.120.10">
    <property type="entry name" value="Alpha-D-Glucose-1,6-Bisphosphate, subunit A, domain 3"/>
    <property type="match status" value="3"/>
</dbReference>
<dbReference type="Gene3D" id="3.30.310.50">
    <property type="entry name" value="Alpha-D-phosphohexomutase, C-terminal domain"/>
    <property type="match status" value="1"/>
</dbReference>
<dbReference type="HAMAP" id="MF_01554_B">
    <property type="entry name" value="GlmM_B"/>
    <property type="match status" value="1"/>
</dbReference>
<dbReference type="InterPro" id="IPR005844">
    <property type="entry name" value="A-D-PHexomutase_a/b/a-I"/>
</dbReference>
<dbReference type="InterPro" id="IPR016055">
    <property type="entry name" value="A-D-PHexomutase_a/b/a-I/II/III"/>
</dbReference>
<dbReference type="InterPro" id="IPR005845">
    <property type="entry name" value="A-D-PHexomutase_a/b/a-II"/>
</dbReference>
<dbReference type="InterPro" id="IPR005846">
    <property type="entry name" value="A-D-PHexomutase_a/b/a-III"/>
</dbReference>
<dbReference type="InterPro" id="IPR005843">
    <property type="entry name" value="A-D-PHexomutase_C"/>
</dbReference>
<dbReference type="InterPro" id="IPR036900">
    <property type="entry name" value="A-D-PHexomutase_C_sf"/>
</dbReference>
<dbReference type="InterPro" id="IPR005841">
    <property type="entry name" value="Alpha-D-phosphohexomutase_SF"/>
</dbReference>
<dbReference type="InterPro" id="IPR006352">
    <property type="entry name" value="GlmM_bact"/>
</dbReference>
<dbReference type="InterPro" id="IPR050060">
    <property type="entry name" value="Phosphoglucosamine_mutase"/>
</dbReference>
<dbReference type="NCBIfam" id="TIGR01455">
    <property type="entry name" value="glmM"/>
    <property type="match status" value="1"/>
</dbReference>
<dbReference type="NCBIfam" id="NF008139">
    <property type="entry name" value="PRK10887.1"/>
    <property type="match status" value="1"/>
</dbReference>
<dbReference type="PANTHER" id="PTHR42946:SF1">
    <property type="entry name" value="PHOSPHOGLUCOMUTASE (ALPHA-D-GLUCOSE-1,6-BISPHOSPHATE-DEPENDENT)"/>
    <property type="match status" value="1"/>
</dbReference>
<dbReference type="PANTHER" id="PTHR42946">
    <property type="entry name" value="PHOSPHOHEXOSE MUTASE"/>
    <property type="match status" value="1"/>
</dbReference>
<dbReference type="Pfam" id="PF02878">
    <property type="entry name" value="PGM_PMM_I"/>
    <property type="match status" value="1"/>
</dbReference>
<dbReference type="Pfam" id="PF02879">
    <property type="entry name" value="PGM_PMM_II"/>
    <property type="match status" value="1"/>
</dbReference>
<dbReference type="Pfam" id="PF02880">
    <property type="entry name" value="PGM_PMM_III"/>
    <property type="match status" value="1"/>
</dbReference>
<dbReference type="Pfam" id="PF00408">
    <property type="entry name" value="PGM_PMM_IV"/>
    <property type="match status" value="1"/>
</dbReference>
<dbReference type="PRINTS" id="PR00509">
    <property type="entry name" value="PGMPMM"/>
</dbReference>
<dbReference type="SUPFAM" id="SSF55957">
    <property type="entry name" value="Phosphoglucomutase, C-terminal domain"/>
    <property type="match status" value="1"/>
</dbReference>
<dbReference type="SUPFAM" id="SSF53738">
    <property type="entry name" value="Phosphoglucomutase, first 3 domains"/>
    <property type="match status" value="3"/>
</dbReference>
<proteinExistence type="inferred from homology"/>